<feature type="chain" id="PRO_0000196943" description="2,3,4,5-tetrahydropyridine-2,6-dicarboxylate N-succinyltransferase">
    <location>
        <begin position="1"/>
        <end position="51" status="greater than"/>
    </location>
</feature>
<feature type="non-terminal residue">
    <location>
        <position position="51"/>
    </location>
</feature>
<dbReference type="EC" id="2.3.1.117"/>
<dbReference type="EMBL" id="X78685">
    <property type="protein sequence ID" value="CAA55354.1"/>
    <property type="molecule type" value="Genomic_DNA"/>
</dbReference>
<dbReference type="PIR" id="S54757">
    <property type="entry name" value="S54757"/>
</dbReference>
<dbReference type="SMR" id="P41397"/>
<dbReference type="STRING" id="571.AB185_31020"/>
<dbReference type="eggNOG" id="COG2171">
    <property type="taxonomic scope" value="Bacteria"/>
</dbReference>
<dbReference type="UniPathway" id="UPA00034">
    <property type="reaction ID" value="UER00019"/>
</dbReference>
<dbReference type="GO" id="GO:0005737">
    <property type="term" value="C:cytoplasm"/>
    <property type="evidence" value="ECO:0007669"/>
    <property type="project" value="UniProtKB-SubCell"/>
</dbReference>
<dbReference type="GO" id="GO:0008666">
    <property type="term" value="F:2,3,4,5-tetrahydropyridine-2,6-dicarboxylate N-succinyltransferase activity"/>
    <property type="evidence" value="ECO:0007669"/>
    <property type="project" value="UniProtKB-EC"/>
</dbReference>
<dbReference type="GO" id="GO:0019877">
    <property type="term" value="P:diaminopimelate biosynthetic process"/>
    <property type="evidence" value="ECO:0007669"/>
    <property type="project" value="UniProtKB-KW"/>
</dbReference>
<dbReference type="GO" id="GO:0009089">
    <property type="term" value="P:lysine biosynthetic process via diaminopimelate"/>
    <property type="evidence" value="ECO:0007669"/>
    <property type="project" value="UniProtKB-UniPathway"/>
</dbReference>
<dbReference type="Gene3D" id="1.10.166.10">
    <property type="entry name" value="Tetrahydrodipicolinate-N-succinyltransferase, N-terminal domain"/>
    <property type="match status" value="1"/>
</dbReference>
<dbReference type="InterPro" id="IPR023180">
    <property type="entry name" value="THP_succinylTrfase_dom1"/>
</dbReference>
<dbReference type="InterPro" id="IPR037133">
    <property type="entry name" value="THP_succinylTrfase_N_sf"/>
</dbReference>
<dbReference type="Pfam" id="PF14805">
    <property type="entry name" value="THDPS_N_2"/>
    <property type="match status" value="1"/>
</dbReference>
<reference key="1">
    <citation type="journal article" date="1995" name="Mol. Gen. Genet.">
        <title>The role of uridylyltransferase in the control of Klebsiella pneumoniae nif gene regulation.</title>
        <authorList>
            <person name="Edwards R.A."/>
            <person name="Merrick M.J."/>
        </authorList>
    </citation>
    <scope>NUCLEOTIDE SEQUENCE [GENOMIC DNA]</scope>
    <source>
        <strain>M5a1</strain>
    </source>
</reference>
<sequence length="51" mass="5582">MQQLQNVIESAFERRADITPANVDTVTREAVNQVISLLDSGALRVAKKIDG</sequence>
<accession>P41397</accession>
<evidence type="ECO:0000250" key="1"/>
<evidence type="ECO:0000305" key="2"/>
<proteinExistence type="inferred from homology"/>
<gene>
    <name type="primary">dapD</name>
</gene>
<protein>
    <recommendedName>
        <fullName>2,3,4,5-tetrahydropyridine-2,6-dicarboxylate N-succinyltransferase</fullName>
        <ecNumber>2.3.1.117</ecNumber>
    </recommendedName>
    <alternativeName>
        <fullName>Tetrahydrodipicolinate N-succinyltransferase</fullName>
        <shortName>THDP succinyltransferase</shortName>
        <shortName>THP succinyltransferase</shortName>
        <shortName>Tetrahydropicolinate succinylase</shortName>
    </alternativeName>
</protein>
<name>DAPD_KLEOX</name>
<comment type="catalytic activity">
    <reaction>
        <text>(S)-2,3,4,5-tetrahydrodipicolinate + succinyl-CoA + H2O = (S)-2-succinylamino-6-oxoheptanedioate + CoA</text>
        <dbReference type="Rhea" id="RHEA:17325"/>
        <dbReference type="ChEBI" id="CHEBI:15377"/>
        <dbReference type="ChEBI" id="CHEBI:15685"/>
        <dbReference type="ChEBI" id="CHEBI:16845"/>
        <dbReference type="ChEBI" id="CHEBI:57287"/>
        <dbReference type="ChEBI" id="CHEBI:57292"/>
        <dbReference type="EC" id="2.3.1.117"/>
    </reaction>
</comment>
<comment type="pathway">
    <text>Amino-acid biosynthesis; L-lysine biosynthesis via DAP pathway; LL-2,6-diaminopimelate from (S)-tetrahydrodipicolinate (succinylase route): step 1/3.</text>
</comment>
<comment type="subunit">
    <text evidence="1">Homotrimer.</text>
</comment>
<comment type="subcellular location">
    <subcellularLocation>
        <location evidence="1">Cytoplasm</location>
    </subcellularLocation>
</comment>
<comment type="similarity">
    <text evidence="2">Belongs to the transferase hexapeptide repeat family.</text>
</comment>
<keyword id="KW-0012">Acyltransferase</keyword>
<keyword id="KW-0028">Amino-acid biosynthesis</keyword>
<keyword id="KW-0963">Cytoplasm</keyword>
<keyword id="KW-0220">Diaminopimelate biosynthesis</keyword>
<keyword id="KW-0457">Lysine biosynthesis</keyword>
<keyword id="KW-0677">Repeat</keyword>
<keyword id="KW-0808">Transferase</keyword>
<organism>
    <name type="scientific">Klebsiella oxytoca</name>
    <dbReference type="NCBI Taxonomy" id="571"/>
    <lineage>
        <taxon>Bacteria</taxon>
        <taxon>Pseudomonadati</taxon>
        <taxon>Pseudomonadota</taxon>
        <taxon>Gammaproteobacteria</taxon>
        <taxon>Enterobacterales</taxon>
        <taxon>Enterobacteriaceae</taxon>
        <taxon>Klebsiella/Raoultella group</taxon>
        <taxon>Klebsiella</taxon>
    </lineage>
</organism>